<organism>
    <name type="scientific">Salmonella agona (strain SL483)</name>
    <dbReference type="NCBI Taxonomy" id="454166"/>
    <lineage>
        <taxon>Bacteria</taxon>
        <taxon>Pseudomonadati</taxon>
        <taxon>Pseudomonadota</taxon>
        <taxon>Gammaproteobacteria</taxon>
        <taxon>Enterobacterales</taxon>
        <taxon>Enterobacteriaceae</taxon>
        <taxon>Salmonella</taxon>
    </lineage>
</organism>
<sequence length="221" mass="24890">MDTLDELLPREKMLRSGIASLSDVELLALFLRTGTPGKDVMTLAKEILQHFGSLYGLLSADFAQFRGVNGIGLAKFAQLKGIAELARRYYSVRMNEESALLSPEMTREFLQSQLTGEEREIFLVIFLDAQHRVLQHSRLFSGTLNHVEVHPREIVREAIKLNASAVILAHNHPSGCAEPSKADKLITERVIKCCQFMDIRVLDHLIIGRGEYVSFAERGWI</sequence>
<comment type="similarity">
    <text evidence="1">Belongs to the UPF0758 family. YicR subfamily.</text>
</comment>
<accession>B5EXE3</accession>
<proteinExistence type="inferred from homology"/>
<feature type="chain" id="PRO_1000089837" description="UPF0758 protein YicR">
    <location>
        <begin position="1"/>
        <end position="221"/>
    </location>
</feature>
<feature type="domain" description="MPN" evidence="2">
    <location>
        <begin position="99"/>
        <end position="221"/>
    </location>
</feature>
<feature type="short sequence motif" description="JAMM motif" evidence="2">
    <location>
        <begin position="170"/>
        <end position="183"/>
    </location>
</feature>
<feature type="binding site" evidence="2">
    <location>
        <position position="170"/>
    </location>
    <ligand>
        <name>Zn(2+)</name>
        <dbReference type="ChEBI" id="CHEBI:29105"/>
        <note>catalytic</note>
    </ligand>
</feature>
<feature type="binding site" evidence="2">
    <location>
        <position position="172"/>
    </location>
    <ligand>
        <name>Zn(2+)</name>
        <dbReference type="ChEBI" id="CHEBI:29105"/>
        <note>catalytic</note>
    </ligand>
</feature>
<feature type="binding site" evidence="2">
    <location>
        <position position="183"/>
    </location>
    <ligand>
        <name>Zn(2+)</name>
        <dbReference type="ChEBI" id="CHEBI:29105"/>
        <note>catalytic</note>
    </ligand>
</feature>
<name>YICR_SALA4</name>
<gene>
    <name evidence="1" type="primary">yicR</name>
    <name type="ordered locus">SeAg_B3946</name>
</gene>
<protein>
    <recommendedName>
        <fullName evidence="1">UPF0758 protein YicR</fullName>
    </recommendedName>
</protein>
<reference key="1">
    <citation type="journal article" date="2011" name="J. Bacteriol.">
        <title>Comparative genomics of 28 Salmonella enterica isolates: evidence for CRISPR-mediated adaptive sublineage evolution.</title>
        <authorList>
            <person name="Fricke W.F."/>
            <person name="Mammel M.K."/>
            <person name="McDermott P.F."/>
            <person name="Tartera C."/>
            <person name="White D.G."/>
            <person name="Leclerc J.E."/>
            <person name="Ravel J."/>
            <person name="Cebula T.A."/>
        </authorList>
    </citation>
    <scope>NUCLEOTIDE SEQUENCE [LARGE SCALE GENOMIC DNA]</scope>
    <source>
        <strain>SL483</strain>
    </source>
</reference>
<evidence type="ECO:0000255" key="1">
    <source>
        <dbReference type="HAMAP-Rule" id="MF_00018"/>
    </source>
</evidence>
<evidence type="ECO:0000255" key="2">
    <source>
        <dbReference type="PROSITE-ProRule" id="PRU01182"/>
    </source>
</evidence>
<dbReference type="EMBL" id="CP001138">
    <property type="protein sequence ID" value="ACH52772.1"/>
    <property type="molecule type" value="Genomic_DNA"/>
</dbReference>
<dbReference type="SMR" id="B5EXE3"/>
<dbReference type="KEGG" id="sea:SeAg_B3946"/>
<dbReference type="HOGENOM" id="CLU_073529_0_1_6"/>
<dbReference type="Proteomes" id="UP000008819">
    <property type="component" value="Chromosome"/>
</dbReference>
<dbReference type="GO" id="GO:0046872">
    <property type="term" value="F:metal ion binding"/>
    <property type="evidence" value="ECO:0007669"/>
    <property type="project" value="UniProtKB-KW"/>
</dbReference>
<dbReference type="GO" id="GO:0008237">
    <property type="term" value="F:metallopeptidase activity"/>
    <property type="evidence" value="ECO:0007669"/>
    <property type="project" value="UniProtKB-KW"/>
</dbReference>
<dbReference type="GO" id="GO:0006508">
    <property type="term" value="P:proteolysis"/>
    <property type="evidence" value="ECO:0007669"/>
    <property type="project" value="UniProtKB-KW"/>
</dbReference>
<dbReference type="CDD" id="cd08071">
    <property type="entry name" value="MPN_DUF2466"/>
    <property type="match status" value="1"/>
</dbReference>
<dbReference type="Gene3D" id="3.40.140.10">
    <property type="entry name" value="Cytidine Deaminase, domain 2"/>
    <property type="match status" value="1"/>
</dbReference>
<dbReference type="HAMAP" id="MF_00018">
    <property type="entry name" value="UPF0758_YicR"/>
    <property type="match status" value="1"/>
</dbReference>
<dbReference type="InterPro" id="IPR037518">
    <property type="entry name" value="MPN"/>
</dbReference>
<dbReference type="InterPro" id="IPR025657">
    <property type="entry name" value="RadC_JAB"/>
</dbReference>
<dbReference type="InterPro" id="IPR010994">
    <property type="entry name" value="RuvA_2-like"/>
</dbReference>
<dbReference type="InterPro" id="IPR001405">
    <property type="entry name" value="UPF0758"/>
</dbReference>
<dbReference type="InterPro" id="IPR020891">
    <property type="entry name" value="UPF0758_CS"/>
</dbReference>
<dbReference type="InterPro" id="IPR046778">
    <property type="entry name" value="UPF0758_N"/>
</dbReference>
<dbReference type="InterPro" id="IPR022820">
    <property type="entry name" value="UPF0758_YicR"/>
</dbReference>
<dbReference type="NCBIfam" id="NF000642">
    <property type="entry name" value="PRK00024.1"/>
    <property type="match status" value="1"/>
</dbReference>
<dbReference type="NCBIfam" id="TIGR00608">
    <property type="entry name" value="radc"/>
    <property type="match status" value="1"/>
</dbReference>
<dbReference type="PANTHER" id="PTHR30471">
    <property type="entry name" value="DNA REPAIR PROTEIN RADC"/>
    <property type="match status" value="1"/>
</dbReference>
<dbReference type="PANTHER" id="PTHR30471:SF3">
    <property type="entry name" value="UPF0758 PROTEIN YEES-RELATED"/>
    <property type="match status" value="1"/>
</dbReference>
<dbReference type="Pfam" id="PF04002">
    <property type="entry name" value="RadC"/>
    <property type="match status" value="1"/>
</dbReference>
<dbReference type="Pfam" id="PF20582">
    <property type="entry name" value="UPF0758_N"/>
    <property type="match status" value="1"/>
</dbReference>
<dbReference type="SUPFAM" id="SSF47781">
    <property type="entry name" value="RuvA domain 2-like"/>
    <property type="match status" value="1"/>
</dbReference>
<dbReference type="PROSITE" id="PS50249">
    <property type="entry name" value="MPN"/>
    <property type="match status" value="1"/>
</dbReference>
<dbReference type="PROSITE" id="PS01302">
    <property type="entry name" value="UPF0758"/>
    <property type="match status" value="1"/>
</dbReference>
<keyword id="KW-0378">Hydrolase</keyword>
<keyword id="KW-0479">Metal-binding</keyword>
<keyword id="KW-0482">Metalloprotease</keyword>
<keyword id="KW-0645">Protease</keyword>
<keyword id="KW-0862">Zinc</keyword>